<feature type="chain" id="PRO_1000000826" description="Adenylosuccinate synthetase">
    <location>
        <begin position="1"/>
        <end position="428"/>
    </location>
</feature>
<feature type="active site" description="Proton acceptor" evidence="1">
    <location>
        <position position="13"/>
    </location>
</feature>
<feature type="active site" description="Proton donor" evidence="1">
    <location>
        <position position="41"/>
    </location>
</feature>
<feature type="binding site" evidence="1">
    <location>
        <begin position="12"/>
        <end position="18"/>
    </location>
    <ligand>
        <name>GTP</name>
        <dbReference type="ChEBI" id="CHEBI:37565"/>
    </ligand>
</feature>
<feature type="binding site" description="in other chain" evidence="1">
    <location>
        <begin position="13"/>
        <end position="16"/>
    </location>
    <ligand>
        <name>IMP</name>
        <dbReference type="ChEBI" id="CHEBI:58053"/>
        <note>ligand shared between dimeric partners</note>
    </ligand>
</feature>
<feature type="binding site" evidence="1">
    <location>
        <position position="13"/>
    </location>
    <ligand>
        <name>Mg(2+)</name>
        <dbReference type="ChEBI" id="CHEBI:18420"/>
    </ligand>
</feature>
<feature type="binding site" description="in other chain" evidence="1">
    <location>
        <begin position="38"/>
        <end position="41"/>
    </location>
    <ligand>
        <name>IMP</name>
        <dbReference type="ChEBI" id="CHEBI:58053"/>
        <note>ligand shared between dimeric partners</note>
    </ligand>
</feature>
<feature type="binding site" evidence="1">
    <location>
        <begin position="40"/>
        <end position="42"/>
    </location>
    <ligand>
        <name>GTP</name>
        <dbReference type="ChEBI" id="CHEBI:37565"/>
    </ligand>
</feature>
<feature type="binding site" evidence="1">
    <location>
        <position position="40"/>
    </location>
    <ligand>
        <name>Mg(2+)</name>
        <dbReference type="ChEBI" id="CHEBI:18420"/>
    </ligand>
</feature>
<feature type="binding site" description="in other chain" evidence="1">
    <location>
        <position position="129"/>
    </location>
    <ligand>
        <name>IMP</name>
        <dbReference type="ChEBI" id="CHEBI:58053"/>
        <note>ligand shared between dimeric partners</note>
    </ligand>
</feature>
<feature type="binding site" evidence="1">
    <location>
        <position position="143"/>
    </location>
    <ligand>
        <name>IMP</name>
        <dbReference type="ChEBI" id="CHEBI:58053"/>
        <note>ligand shared between dimeric partners</note>
    </ligand>
</feature>
<feature type="binding site" description="in other chain" evidence="1">
    <location>
        <position position="224"/>
    </location>
    <ligand>
        <name>IMP</name>
        <dbReference type="ChEBI" id="CHEBI:58053"/>
        <note>ligand shared between dimeric partners</note>
    </ligand>
</feature>
<feature type="binding site" description="in other chain" evidence="1">
    <location>
        <position position="239"/>
    </location>
    <ligand>
        <name>IMP</name>
        <dbReference type="ChEBI" id="CHEBI:58053"/>
        <note>ligand shared between dimeric partners</note>
    </ligand>
</feature>
<feature type="binding site" evidence="1">
    <location>
        <begin position="299"/>
        <end position="305"/>
    </location>
    <ligand>
        <name>substrate</name>
    </ligand>
</feature>
<feature type="binding site" description="in other chain" evidence="1">
    <location>
        <position position="303"/>
    </location>
    <ligand>
        <name>IMP</name>
        <dbReference type="ChEBI" id="CHEBI:58053"/>
        <note>ligand shared between dimeric partners</note>
    </ligand>
</feature>
<feature type="binding site" evidence="1">
    <location>
        <position position="305"/>
    </location>
    <ligand>
        <name>GTP</name>
        <dbReference type="ChEBI" id="CHEBI:37565"/>
    </ligand>
</feature>
<feature type="binding site" evidence="1">
    <location>
        <begin position="331"/>
        <end position="333"/>
    </location>
    <ligand>
        <name>GTP</name>
        <dbReference type="ChEBI" id="CHEBI:37565"/>
    </ligand>
</feature>
<feature type="binding site" evidence="1">
    <location>
        <begin position="410"/>
        <end position="412"/>
    </location>
    <ligand>
        <name>GTP</name>
        <dbReference type="ChEBI" id="CHEBI:37565"/>
    </ligand>
</feature>
<evidence type="ECO:0000255" key="1">
    <source>
        <dbReference type="HAMAP-Rule" id="MF_00011"/>
    </source>
</evidence>
<keyword id="KW-0963">Cytoplasm</keyword>
<keyword id="KW-0342">GTP-binding</keyword>
<keyword id="KW-0436">Ligase</keyword>
<keyword id="KW-0460">Magnesium</keyword>
<keyword id="KW-0479">Metal-binding</keyword>
<keyword id="KW-0547">Nucleotide-binding</keyword>
<keyword id="KW-0658">Purine biosynthesis</keyword>
<sequence>MSNIVIVGAQWGDEGKGKIADTLAEKADLVVRYQGGNNAGHTLVVNGKKTFLHLIPSGVLHQHTKCVIGHGVVLDPVALDEEITRLQAKGIAISAENLFVSESCTIITSYHKLLDAVRESNTSEKIGTTGKGIGPAYEDKVSRKGIKFKHLFDKDLLRSRLAISLAEKETLFRDLYKVEYPTLEQEFDKLFALGQKLKQYAADTFSIIDQAIAAGKNVVYEGAQGVLLDVDYGTYPFVTSSNTSVAGVYSGATTAGHGLDHVIGITKAYTTRVGEGPFPTELFDDVGKFIQHKGGEIGVTTGRIRRCGWLDLPLLKYSAKCSNLTSIALTKVDVLSDMDTLKVCIGYKYEGKEIYCAYPGIDLYKVEPILVEMEPFSIDETVTKDNMPAALKTYLKTIENHVGIPISSLAYGPSREQILFFEDYFKKG</sequence>
<proteinExistence type="inferred from homology"/>
<comment type="function">
    <text evidence="1">Plays an important role in the de novo pathway of purine nucleotide biosynthesis. Catalyzes the first committed step in the biosynthesis of AMP from IMP.</text>
</comment>
<comment type="catalytic activity">
    <reaction evidence="1">
        <text>IMP + L-aspartate + GTP = N(6)-(1,2-dicarboxyethyl)-AMP + GDP + phosphate + 2 H(+)</text>
        <dbReference type="Rhea" id="RHEA:15753"/>
        <dbReference type="ChEBI" id="CHEBI:15378"/>
        <dbReference type="ChEBI" id="CHEBI:29991"/>
        <dbReference type="ChEBI" id="CHEBI:37565"/>
        <dbReference type="ChEBI" id="CHEBI:43474"/>
        <dbReference type="ChEBI" id="CHEBI:57567"/>
        <dbReference type="ChEBI" id="CHEBI:58053"/>
        <dbReference type="ChEBI" id="CHEBI:58189"/>
        <dbReference type="EC" id="6.3.4.4"/>
    </reaction>
</comment>
<comment type="cofactor">
    <cofactor evidence="1">
        <name>Mg(2+)</name>
        <dbReference type="ChEBI" id="CHEBI:18420"/>
    </cofactor>
    <text evidence="1">Binds 1 Mg(2+) ion per subunit.</text>
</comment>
<comment type="pathway">
    <text evidence="1">Purine metabolism; AMP biosynthesis via de novo pathway; AMP from IMP: step 1/2.</text>
</comment>
<comment type="subunit">
    <text evidence="1">Homodimer.</text>
</comment>
<comment type="subcellular location">
    <subcellularLocation>
        <location evidence="1">Cytoplasm</location>
    </subcellularLocation>
</comment>
<comment type="similarity">
    <text evidence="1">Belongs to the adenylosuccinate synthetase family.</text>
</comment>
<dbReference type="EC" id="6.3.4.4" evidence="1"/>
<dbReference type="EMBL" id="CP000437">
    <property type="protein sequence ID" value="ABI83595.1"/>
    <property type="molecule type" value="Genomic_DNA"/>
</dbReference>
<dbReference type="RefSeq" id="WP_003013911.1">
    <property type="nucleotide sequence ID" value="NC_017463.1"/>
</dbReference>
<dbReference type="SMR" id="Q0BJY9"/>
<dbReference type="KEGG" id="fth:FTH_1850"/>
<dbReference type="UniPathway" id="UPA00075">
    <property type="reaction ID" value="UER00335"/>
</dbReference>
<dbReference type="GO" id="GO:0005737">
    <property type="term" value="C:cytoplasm"/>
    <property type="evidence" value="ECO:0007669"/>
    <property type="project" value="UniProtKB-SubCell"/>
</dbReference>
<dbReference type="GO" id="GO:0004019">
    <property type="term" value="F:adenylosuccinate synthase activity"/>
    <property type="evidence" value="ECO:0007669"/>
    <property type="project" value="UniProtKB-UniRule"/>
</dbReference>
<dbReference type="GO" id="GO:0005525">
    <property type="term" value="F:GTP binding"/>
    <property type="evidence" value="ECO:0007669"/>
    <property type="project" value="UniProtKB-UniRule"/>
</dbReference>
<dbReference type="GO" id="GO:0000287">
    <property type="term" value="F:magnesium ion binding"/>
    <property type="evidence" value="ECO:0007669"/>
    <property type="project" value="UniProtKB-UniRule"/>
</dbReference>
<dbReference type="GO" id="GO:0044208">
    <property type="term" value="P:'de novo' AMP biosynthetic process"/>
    <property type="evidence" value="ECO:0007669"/>
    <property type="project" value="UniProtKB-UniRule"/>
</dbReference>
<dbReference type="GO" id="GO:0046040">
    <property type="term" value="P:IMP metabolic process"/>
    <property type="evidence" value="ECO:0007669"/>
    <property type="project" value="TreeGrafter"/>
</dbReference>
<dbReference type="CDD" id="cd03108">
    <property type="entry name" value="AdSS"/>
    <property type="match status" value="1"/>
</dbReference>
<dbReference type="FunFam" id="1.10.300.10:FF:000001">
    <property type="entry name" value="Adenylosuccinate synthetase"/>
    <property type="match status" value="1"/>
</dbReference>
<dbReference type="FunFam" id="3.90.170.10:FF:000001">
    <property type="entry name" value="Adenylosuccinate synthetase"/>
    <property type="match status" value="1"/>
</dbReference>
<dbReference type="Gene3D" id="3.40.440.10">
    <property type="entry name" value="Adenylosuccinate Synthetase, subunit A, domain 1"/>
    <property type="match status" value="1"/>
</dbReference>
<dbReference type="Gene3D" id="1.10.300.10">
    <property type="entry name" value="Adenylosuccinate Synthetase, subunit A, domain 2"/>
    <property type="match status" value="1"/>
</dbReference>
<dbReference type="Gene3D" id="3.90.170.10">
    <property type="entry name" value="Adenylosuccinate Synthetase, subunit A, domain 3"/>
    <property type="match status" value="1"/>
</dbReference>
<dbReference type="HAMAP" id="MF_00011">
    <property type="entry name" value="Adenylosucc_synth"/>
    <property type="match status" value="1"/>
</dbReference>
<dbReference type="InterPro" id="IPR018220">
    <property type="entry name" value="Adenylosuccin_syn_GTP-bd"/>
</dbReference>
<dbReference type="InterPro" id="IPR033128">
    <property type="entry name" value="Adenylosuccin_syn_Lys_AS"/>
</dbReference>
<dbReference type="InterPro" id="IPR042109">
    <property type="entry name" value="Adenylosuccinate_synth_dom1"/>
</dbReference>
<dbReference type="InterPro" id="IPR042110">
    <property type="entry name" value="Adenylosuccinate_synth_dom2"/>
</dbReference>
<dbReference type="InterPro" id="IPR042111">
    <property type="entry name" value="Adenylosuccinate_synth_dom3"/>
</dbReference>
<dbReference type="InterPro" id="IPR001114">
    <property type="entry name" value="Adenylosuccinate_synthetase"/>
</dbReference>
<dbReference type="InterPro" id="IPR027417">
    <property type="entry name" value="P-loop_NTPase"/>
</dbReference>
<dbReference type="NCBIfam" id="NF002223">
    <property type="entry name" value="PRK01117.1"/>
    <property type="match status" value="1"/>
</dbReference>
<dbReference type="NCBIfam" id="TIGR00184">
    <property type="entry name" value="purA"/>
    <property type="match status" value="1"/>
</dbReference>
<dbReference type="PANTHER" id="PTHR11846">
    <property type="entry name" value="ADENYLOSUCCINATE SYNTHETASE"/>
    <property type="match status" value="1"/>
</dbReference>
<dbReference type="PANTHER" id="PTHR11846:SF0">
    <property type="entry name" value="ADENYLOSUCCINATE SYNTHETASE"/>
    <property type="match status" value="1"/>
</dbReference>
<dbReference type="Pfam" id="PF00709">
    <property type="entry name" value="Adenylsucc_synt"/>
    <property type="match status" value="1"/>
</dbReference>
<dbReference type="SMART" id="SM00788">
    <property type="entry name" value="Adenylsucc_synt"/>
    <property type="match status" value="1"/>
</dbReference>
<dbReference type="SUPFAM" id="SSF52540">
    <property type="entry name" value="P-loop containing nucleoside triphosphate hydrolases"/>
    <property type="match status" value="1"/>
</dbReference>
<dbReference type="PROSITE" id="PS01266">
    <property type="entry name" value="ADENYLOSUCCIN_SYN_1"/>
    <property type="match status" value="1"/>
</dbReference>
<dbReference type="PROSITE" id="PS00513">
    <property type="entry name" value="ADENYLOSUCCIN_SYN_2"/>
    <property type="match status" value="1"/>
</dbReference>
<gene>
    <name evidence="1" type="primary">purA</name>
    <name type="ordered locus">FTH_1850</name>
</gene>
<reference key="1">
    <citation type="journal article" date="2006" name="J. Bacteriol.">
        <title>Chromosome rearrangement and diversification of Francisella tularensis revealed by the type B (OSU18) genome sequence.</title>
        <authorList>
            <person name="Petrosino J.F."/>
            <person name="Xiang Q."/>
            <person name="Karpathy S.E."/>
            <person name="Jiang H."/>
            <person name="Yerrapragada S."/>
            <person name="Liu Y."/>
            <person name="Gioia J."/>
            <person name="Hemphill L."/>
            <person name="Gonzalez A."/>
            <person name="Raghavan T.M."/>
            <person name="Uzman A."/>
            <person name="Fox G.E."/>
            <person name="Highlander S."/>
            <person name="Reichard M."/>
            <person name="Morton R.J."/>
            <person name="Clinkenbeard K.D."/>
            <person name="Weinstock G.M."/>
        </authorList>
    </citation>
    <scope>NUCLEOTIDE SEQUENCE [LARGE SCALE GENOMIC DNA]</scope>
    <source>
        <strain>OSU18</strain>
    </source>
</reference>
<name>PURA_FRATO</name>
<organism>
    <name type="scientific">Francisella tularensis subsp. holarctica (strain OSU18)</name>
    <dbReference type="NCBI Taxonomy" id="393011"/>
    <lineage>
        <taxon>Bacteria</taxon>
        <taxon>Pseudomonadati</taxon>
        <taxon>Pseudomonadota</taxon>
        <taxon>Gammaproteobacteria</taxon>
        <taxon>Thiotrichales</taxon>
        <taxon>Francisellaceae</taxon>
        <taxon>Francisella</taxon>
    </lineage>
</organism>
<accession>Q0BJY9</accession>
<protein>
    <recommendedName>
        <fullName evidence="1">Adenylosuccinate synthetase</fullName>
        <shortName evidence="1">AMPSase</shortName>
        <shortName evidence="1">AdSS</shortName>
        <ecNumber evidence="1">6.3.4.4</ecNumber>
    </recommendedName>
    <alternativeName>
        <fullName evidence="1">IMP--aspartate ligase</fullName>
    </alternativeName>
</protein>